<dbReference type="EC" id="3.6.4.-" evidence="1"/>
<dbReference type="EMBL" id="M87665">
    <property type="protein sequence ID" value="AAA33789.1"/>
    <property type="molecule type" value="Genomic_DNA"/>
</dbReference>
<dbReference type="PIR" id="A49204">
    <property type="entry name" value="A49204"/>
</dbReference>
<dbReference type="SMR" id="P29551"/>
<dbReference type="VEuPathDB" id="FungiDB:T552_02205"/>
<dbReference type="UniPathway" id="UPA00345"/>
<dbReference type="GO" id="GO:0005737">
    <property type="term" value="C:cytoplasm"/>
    <property type="evidence" value="ECO:0007669"/>
    <property type="project" value="UniProtKB-SubCell"/>
</dbReference>
<dbReference type="GO" id="GO:0005524">
    <property type="term" value="F:ATP binding"/>
    <property type="evidence" value="ECO:0007669"/>
    <property type="project" value="UniProtKB-KW"/>
</dbReference>
<dbReference type="GO" id="GO:0016887">
    <property type="term" value="F:ATP hydrolysis activity"/>
    <property type="evidence" value="ECO:0007669"/>
    <property type="project" value="InterPro"/>
</dbReference>
<dbReference type="GO" id="GO:0003723">
    <property type="term" value="F:RNA binding"/>
    <property type="evidence" value="ECO:0007669"/>
    <property type="project" value="UniProtKB-KW"/>
</dbReference>
<dbReference type="GO" id="GO:0003746">
    <property type="term" value="F:translation elongation factor activity"/>
    <property type="evidence" value="ECO:0007669"/>
    <property type="project" value="UniProtKB-KW"/>
</dbReference>
<dbReference type="CDD" id="cd03221">
    <property type="entry name" value="ABCF_EF-3"/>
    <property type="match status" value="1"/>
</dbReference>
<dbReference type="CDD" id="cd18626">
    <property type="entry name" value="CD_eEF3"/>
    <property type="match status" value="1"/>
</dbReference>
<dbReference type="FunFam" id="1.25.10.10:FF:000076">
    <property type="entry name" value="Elongation factor 3"/>
    <property type="match status" value="1"/>
</dbReference>
<dbReference type="FunFam" id="2.40.50.990:FF:000001">
    <property type="entry name" value="Elongation factor 3"/>
    <property type="match status" value="1"/>
</dbReference>
<dbReference type="FunFam" id="3.40.50.300:FF:000193">
    <property type="entry name" value="Probable Elongation factor 3"/>
    <property type="match status" value="1"/>
</dbReference>
<dbReference type="Gene3D" id="1.20.1390.20">
    <property type="match status" value="1"/>
</dbReference>
<dbReference type="Gene3D" id="2.40.50.990">
    <property type="match status" value="1"/>
</dbReference>
<dbReference type="Gene3D" id="1.25.10.10">
    <property type="entry name" value="Leucine-rich Repeat Variant"/>
    <property type="match status" value="1"/>
</dbReference>
<dbReference type="Gene3D" id="3.40.50.300">
    <property type="entry name" value="P-loop containing nucleotide triphosphate hydrolases"/>
    <property type="match status" value="2"/>
</dbReference>
<dbReference type="InterPro" id="IPR003593">
    <property type="entry name" value="AAA+_ATPase"/>
</dbReference>
<dbReference type="InterPro" id="IPR003439">
    <property type="entry name" value="ABC_transporter-like_ATP-bd"/>
</dbReference>
<dbReference type="InterPro" id="IPR017871">
    <property type="entry name" value="ABC_transporter-like_CS"/>
</dbReference>
<dbReference type="InterPro" id="IPR050611">
    <property type="entry name" value="ABCF_EF3_subfamily"/>
</dbReference>
<dbReference type="InterPro" id="IPR011989">
    <property type="entry name" value="ARM-like"/>
</dbReference>
<dbReference type="InterPro" id="IPR016024">
    <property type="entry name" value="ARM-type_fold"/>
</dbReference>
<dbReference type="InterPro" id="IPR015688">
    <property type="entry name" value="eEF3_ABC2_chromodomain-like"/>
</dbReference>
<dbReference type="InterPro" id="IPR047038">
    <property type="entry name" value="eEF3_chromodomain-like_sf"/>
</dbReference>
<dbReference type="InterPro" id="IPR040533">
    <property type="entry name" value="EF3_4HB"/>
</dbReference>
<dbReference type="InterPro" id="IPR047036">
    <property type="entry name" value="EF3_4HB_sf"/>
</dbReference>
<dbReference type="InterPro" id="IPR021133">
    <property type="entry name" value="HEAT_type_2"/>
</dbReference>
<dbReference type="InterPro" id="IPR027417">
    <property type="entry name" value="P-loop_NTPase"/>
</dbReference>
<dbReference type="PANTHER" id="PTHR19211">
    <property type="entry name" value="ATP-BINDING TRANSPORT PROTEIN-RELATED"/>
    <property type="match status" value="1"/>
</dbReference>
<dbReference type="PANTHER" id="PTHR19211:SF5">
    <property type="entry name" value="ELONGATION FACTOR 3A-RELATED"/>
    <property type="match status" value="1"/>
</dbReference>
<dbReference type="Pfam" id="PF17947">
    <property type="entry name" value="4HB"/>
    <property type="match status" value="1"/>
</dbReference>
<dbReference type="Pfam" id="PF00005">
    <property type="entry name" value="ABC_tran"/>
    <property type="match status" value="3"/>
</dbReference>
<dbReference type="Pfam" id="PF24984">
    <property type="entry name" value="HEAT_EF3_GNC1"/>
    <property type="match status" value="1"/>
</dbReference>
<dbReference type="Pfam" id="PF24987">
    <property type="entry name" value="HEAT_EF3_N"/>
    <property type="match status" value="1"/>
</dbReference>
<dbReference type="SMART" id="SM00382">
    <property type="entry name" value="AAA"/>
    <property type="match status" value="2"/>
</dbReference>
<dbReference type="SUPFAM" id="SSF48371">
    <property type="entry name" value="ARM repeat"/>
    <property type="match status" value="1"/>
</dbReference>
<dbReference type="SUPFAM" id="SSF52540">
    <property type="entry name" value="P-loop containing nucleoside triphosphate hydrolases"/>
    <property type="match status" value="2"/>
</dbReference>
<dbReference type="PROSITE" id="PS00211">
    <property type="entry name" value="ABC_TRANSPORTER_1"/>
    <property type="match status" value="2"/>
</dbReference>
<dbReference type="PROSITE" id="PS50893">
    <property type="entry name" value="ABC_TRANSPORTER_2"/>
    <property type="match status" value="2"/>
</dbReference>
<dbReference type="PROSITE" id="PS50077">
    <property type="entry name" value="HEAT_REPEAT"/>
    <property type="match status" value="1"/>
</dbReference>
<comment type="function">
    <text evidence="1">Ribosome-dependent ATPase that functions in cytoplasmic translation elongation (By similarity). Required for the ATP-dependent release of deacylated tRNA from the ribosomal E-site during protein biosynthesis (By similarity). Stimulates the eEF1A-dependent binding of aminoacyl-tRNA to the ribosomal A-site, which has reduced affinity for tRNA as long as the E-site is occupied (By similarity). Assists translation termination by stimulating the release of nascent protein from the ribosome by release factors (By similarity).</text>
</comment>
<comment type="catalytic activity">
    <reaction evidence="1">
        <text>ATP + H2O = ADP + phosphate + H(+)</text>
        <dbReference type="Rhea" id="RHEA:13065"/>
        <dbReference type="ChEBI" id="CHEBI:15377"/>
        <dbReference type="ChEBI" id="CHEBI:15378"/>
        <dbReference type="ChEBI" id="CHEBI:30616"/>
        <dbReference type="ChEBI" id="CHEBI:43474"/>
        <dbReference type="ChEBI" id="CHEBI:456216"/>
    </reaction>
</comment>
<comment type="pathway">
    <text evidence="4">Protein biosynthesis; polypeptide chain elongation.</text>
</comment>
<comment type="subunit">
    <text evidence="1">Monomer.</text>
</comment>
<comment type="subcellular location">
    <subcellularLocation>
        <location evidence="1">Cytoplasm</location>
    </subcellularLocation>
</comment>
<comment type="similarity">
    <text evidence="4">Belongs to the ABC transporter superfamily. ABCF family. EF3 subfamily.</text>
</comment>
<protein>
    <recommendedName>
        <fullName evidence="4">Elongation factor 3</fullName>
        <shortName evidence="4">EF-3</shortName>
        <ecNumber evidence="1">3.6.4.-</ecNumber>
    </recommendedName>
    <alternativeName>
        <fullName evidence="4">Eukaryotic elongation factor 3</fullName>
        <shortName evidence="4">eEF3</shortName>
    </alternativeName>
</protein>
<gene>
    <name type="primary">TEF3</name>
</gene>
<evidence type="ECO:0000250" key="1">
    <source>
        <dbReference type="UniProtKB" id="P16521"/>
    </source>
</evidence>
<evidence type="ECO:0000255" key="2">
    <source>
        <dbReference type="PROSITE-ProRule" id="PRU00434"/>
    </source>
</evidence>
<evidence type="ECO:0000256" key="3">
    <source>
        <dbReference type="SAM" id="MobiDB-lite"/>
    </source>
</evidence>
<evidence type="ECO:0000305" key="4"/>
<reference key="1">
    <citation type="journal article" date="1992" name="Infect. Immun.">
        <title>Fungus-specific translation elongation factor 3 gene present in Pneumocystis carinii.</title>
        <authorList>
            <person name="Ypma-Wong M."/>
            <person name="Fonzi W.A."/>
            <person name="Sypherd P.S."/>
        </authorList>
    </citation>
    <scope>NUCLEOTIDE SEQUENCE [GENOMIC DNA]</scope>
</reference>
<organism>
    <name type="scientific">Pneumocystis carinii</name>
    <dbReference type="NCBI Taxonomy" id="4754"/>
    <lineage>
        <taxon>Eukaryota</taxon>
        <taxon>Fungi</taxon>
        <taxon>Dikarya</taxon>
        <taxon>Ascomycota</taxon>
        <taxon>Taphrinomycotina</taxon>
        <taxon>Pneumocystomycetes</taxon>
        <taxon>Pneumocystaceae</taxon>
        <taxon>Pneumocystis</taxon>
    </lineage>
</organism>
<keyword id="KW-0067">ATP-binding</keyword>
<keyword id="KW-0963">Cytoplasm</keyword>
<keyword id="KW-0251">Elongation factor</keyword>
<keyword id="KW-0378">Hydrolase</keyword>
<keyword id="KW-0547">Nucleotide-binding</keyword>
<keyword id="KW-0648">Protein biosynthesis</keyword>
<keyword id="KW-0677">Repeat</keyword>
<keyword id="KW-0694">RNA-binding</keyword>
<name>EF3_PNECA</name>
<sequence length="1042" mass="117507">MPGNVVSPKVLMDLIPKLKISMQETDKNEVIKNSEQHSSVSWDPDTCENLYITLEEQIESKDTLAREQALKALLLTLDATNKRVEPYLVRLLPRVLKQVGLEKVAAVRTQASTVAEDIIKTMNPYAVKTILSHVTNSIKTSGKWMEKMCAFRLLDMLVEKAPCQMSYRLPELIPILSESMWDTRTDIKNQARKTMTSVCTLISNPDIDKFIPVLIDCIAQPEKVPETIHTLGATTFVQEVHASTLSIMVPLLYRGLNERETTIKRKSAVIIDNMCKLVEDPYIIAPFLPKLIPTLEHIKETIGDPECRSVVNRSLATLIRVGNVKEGKIPEVLNIAKPENCMETLLSILKGQELVPVSDVYLNYISCIASQLIDEKNNEVVDWDVNISPYLQPIILKADINCIIDQFRKRSISGFHSSSAESEEEEGEDLCNCEFSLAYGAKILLNRTSLNLKRGYRYGLCGPNGSGKSTLLRSIFNGQLEGFPTELKTAYVEHDIDDTESKTSVFDFIANDPSVVVKNKQEVISSLLEHSFTEDMLSIPISNLSGGWKMKLALVRAMLRQVDILLLDEPTNHLDVKNVAWLENFLTSQTHITSIIVSHDSKFLDNVVQAIIHYEHFKLKKYMGNMSKFITLVPSARSYQDISMSEIEFSFPEPGYLEGVKTKQRAICRMRDIEFQYEGTSEPQIKNVSLQVSLSSRIAVIGPNGAGKSTLIKVLCGELIPQKGEVWCHPNLRIAYVAQAAFVHLGSHENKTPSEYIQWRYRTAEDSETIDRASRQLTENDEHLMNKIFKINGTSRKIQGIHSRRKLKNSYEYECSFLVGENVGEKNERWVPLPSMNNEWLPRGELIESHSKMVAEVDMKEALKSGSFRPLVRKEIEKHCESFGLDAEIVTHSRIKGLSGGQKVKLVLAAGSWLKPHVIVLDEPTNYLDRDSLGALSKALKSFEGGVVIITHSVEFTKNLTEEVWSVQNGQMTPSGHNWVQGQGTGPRLQEQEEEDTFDALGNKIEAKKKAKKLTSSELRKKKKERMARRKKGEEVFSDEDD</sequence>
<proteinExistence type="inferred from homology"/>
<feature type="chain" id="PRO_0000093456" description="Elongation factor 3">
    <location>
        <begin position="1"/>
        <end position="1042"/>
    </location>
</feature>
<feature type="repeat" description="HEAT 1">
    <location>
        <begin position="9"/>
        <end position="46"/>
    </location>
</feature>
<feature type="repeat" description="HEAT 2">
    <location>
        <begin position="86"/>
        <end position="124"/>
    </location>
</feature>
<feature type="repeat" description="HEAT 3">
    <location>
        <begin position="167"/>
        <end position="204"/>
    </location>
</feature>
<feature type="repeat" description="HEAT 4">
    <location>
        <begin position="206"/>
        <end position="242"/>
    </location>
</feature>
<feature type="repeat" description="HEAT 5">
    <location>
        <begin position="243"/>
        <end position="280"/>
    </location>
</feature>
<feature type="repeat" description="HEAT 6">
    <location>
        <begin position="289"/>
        <end position="327"/>
    </location>
</feature>
<feature type="domain" description="ABC transporter 1" evidence="2">
    <location>
        <begin position="425"/>
        <end position="642"/>
    </location>
</feature>
<feature type="domain" description="ABC transporter 2" evidence="2">
    <location>
        <begin position="668"/>
        <end position="994"/>
    </location>
</feature>
<feature type="region of interest" description="Disordered" evidence="3">
    <location>
        <begin position="1009"/>
        <end position="1042"/>
    </location>
</feature>
<feature type="compositionally biased region" description="Basic residues" evidence="3">
    <location>
        <begin position="1020"/>
        <end position="1031"/>
    </location>
</feature>
<feature type="binding site" evidence="1">
    <location>
        <position position="704"/>
    </location>
    <ligand>
        <name>ADP</name>
        <dbReference type="ChEBI" id="CHEBI:456216"/>
    </ligand>
</feature>
<feature type="binding site" evidence="1">
    <location>
        <position position="923"/>
    </location>
    <ligand>
        <name>ADP</name>
        <dbReference type="ChEBI" id="CHEBI:456216"/>
    </ligand>
</feature>
<feature type="binding site" evidence="1">
    <location>
        <position position="926"/>
    </location>
    <ligand>
        <name>ADP</name>
        <dbReference type="ChEBI" id="CHEBI:456216"/>
    </ligand>
</feature>
<feature type="binding site" evidence="1">
    <location>
        <position position="952"/>
    </location>
    <ligand>
        <name>ADP</name>
        <dbReference type="ChEBI" id="CHEBI:456216"/>
    </ligand>
</feature>
<accession>P29551</accession>